<reference key="1">
    <citation type="journal article" date="2001" name="Science">
        <title>Comparative genomics of Listeria species.</title>
        <authorList>
            <person name="Glaser P."/>
            <person name="Frangeul L."/>
            <person name="Buchrieser C."/>
            <person name="Rusniok C."/>
            <person name="Amend A."/>
            <person name="Baquero F."/>
            <person name="Berche P."/>
            <person name="Bloecker H."/>
            <person name="Brandt P."/>
            <person name="Chakraborty T."/>
            <person name="Charbit A."/>
            <person name="Chetouani F."/>
            <person name="Couve E."/>
            <person name="de Daruvar A."/>
            <person name="Dehoux P."/>
            <person name="Domann E."/>
            <person name="Dominguez-Bernal G."/>
            <person name="Duchaud E."/>
            <person name="Durant L."/>
            <person name="Dussurget O."/>
            <person name="Entian K.-D."/>
            <person name="Fsihi H."/>
            <person name="Garcia-del Portillo F."/>
            <person name="Garrido P."/>
            <person name="Gautier L."/>
            <person name="Goebel W."/>
            <person name="Gomez-Lopez N."/>
            <person name="Hain T."/>
            <person name="Hauf J."/>
            <person name="Jackson D."/>
            <person name="Jones L.-M."/>
            <person name="Kaerst U."/>
            <person name="Kreft J."/>
            <person name="Kuhn M."/>
            <person name="Kunst F."/>
            <person name="Kurapkat G."/>
            <person name="Madueno E."/>
            <person name="Maitournam A."/>
            <person name="Mata Vicente J."/>
            <person name="Ng E."/>
            <person name="Nedjari H."/>
            <person name="Nordsiek G."/>
            <person name="Novella S."/>
            <person name="de Pablos B."/>
            <person name="Perez-Diaz J.-C."/>
            <person name="Purcell R."/>
            <person name="Remmel B."/>
            <person name="Rose M."/>
            <person name="Schlueter T."/>
            <person name="Simoes N."/>
            <person name="Tierrez A."/>
            <person name="Vazquez-Boland J.-A."/>
            <person name="Voss H."/>
            <person name="Wehland J."/>
            <person name="Cossart P."/>
        </authorList>
    </citation>
    <scope>NUCLEOTIDE SEQUENCE [LARGE SCALE GENOMIC DNA]</scope>
    <source>
        <strain>ATCC BAA-680 / CLIP 11262</strain>
    </source>
</reference>
<dbReference type="EC" id="2.7.1.33" evidence="1"/>
<dbReference type="EMBL" id="AL596164">
    <property type="protein sequence ID" value="CAC95486.1"/>
    <property type="molecule type" value="Genomic_DNA"/>
</dbReference>
<dbReference type="PIR" id="AF1464">
    <property type="entry name" value="AF1464"/>
</dbReference>
<dbReference type="RefSeq" id="WP_003772472.1">
    <property type="nucleotide sequence ID" value="NC_003212.1"/>
</dbReference>
<dbReference type="SMR" id="Q92F54"/>
<dbReference type="STRING" id="272626.gene:17564565"/>
<dbReference type="GeneID" id="93233688"/>
<dbReference type="KEGG" id="lin:lin0253"/>
<dbReference type="eggNOG" id="COG1521">
    <property type="taxonomic scope" value="Bacteria"/>
</dbReference>
<dbReference type="HOGENOM" id="CLU_066627_1_0_9"/>
<dbReference type="OrthoDB" id="9804707at2"/>
<dbReference type="UniPathway" id="UPA00241">
    <property type="reaction ID" value="UER00352"/>
</dbReference>
<dbReference type="Proteomes" id="UP000002513">
    <property type="component" value="Chromosome"/>
</dbReference>
<dbReference type="GO" id="GO:0005737">
    <property type="term" value="C:cytoplasm"/>
    <property type="evidence" value="ECO:0007669"/>
    <property type="project" value="UniProtKB-SubCell"/>
</dbReference>
<dbReference type="GO" id="GO:0005524">
    <property type="term" value="F:ATP binding"/>
    <property type="evidence" value="ECO:0007669"/>
    <property type="project" value="UniProtKB-UniRule"/>
</dbReference>
<dbReference type="GO" id="GO:0046872">
    <property type="term" value="F:metal ion binding"/>
    <property type="evidence" value="ECO:0007669"/>
    <property type="project" value="UniProtKB-KW"/>
</dbReference>
<dbReference type="GO" id="GO:0004594">
    <property type="term" value="F:pantothenate kinase activity"/>
    <property type="evidence" value="ECO:0007669"/>
    <property type="project" value="UniProtKB-UniRule"/>
</dbReference>
<dbReference type="GO" id="GO:0015937">
    <property type="term" value="P:coenzyme A biosynthetic process"/>
    <property type="evidence" value="ECO:0007669"/>
    <property type="project" value="UniProtKB-UniRule"/>
</dbReference>
<dbReference type="CDD" id="cd24015">
    <property type="entry name" value="ASKHA_NBD_PanK-III"/>
    <property type="match status" value="1"/>
</dbReference>
<dbReference type="Gene3D" id="3.30.420.40">
    <property type="match status" value="2"/>
</dbReference>
<dbReference type="HAMAP" id="MF_01274">
    <property type="entry name" value="Pantothen_kinase_3"/>
    <property type="match status" value="1"/>
</dbReference>
<dbReference type="InterPro" id="IPR043129">
    <property type="entry name" value="ATPase_NBD"/>
</dbReference>
<dbReference type="InterPro" id="IPR004619">
    <property type="entry name" value="Type_III_PanK"/>
</dbReference>
<dbReference type="NCBIfam" id="TIGR00671">
    <property type="entry name" value="baf"/>
    <property type="match status" value="1"/>
</dbReference>
<dbReference type="NCBIfam" id="NF009843">
    <property type="entry name" value="PRK13318.1-1"/>
    <property type="match status" value="1"/>
</dbReference>
<dbReference type="NCBIfam" id="NF009847">
    <property type="entry name" value="PRK13318.1-5"/>
    <property type="match status" value="1"/>
</dbReference>
<dbReference type="NCBIfam" id="NF009848">
    <property type="entry name" value="PRK13318.1-6"/>
    <property type="match status" value="1"/>
</dbReference>
<dbReference type="NCBIfam" id="NF009855">
    <property type="entry name" value="PRK13321.1"/>
    <property type="match status" value="1"/>
</dbReference>
<dbReference type="PANTHER" id="PTHR34265">
    <property type="entry name" value="TYPE III PANTOTHENATE KINASE"/>
    <property type="match status" value="1"/>
</dbReference>
<dbReference type="PANTHER" id="PTHR34265:SF1">
    <property type="entry name" value="TYPE III PANTOTHENATE KINASE"/>
    <property type="match status" value="1"/>
</dbReference>
<dbReference type="Pfam" id="PF03309">
    <property type="entry name" value="Pan_kinase"/>
    <property type="match status" value="1"/>
</dbReference>
<dbReference type="SUPFAM" id="SSF53067">
    <property type="entry name" value="Actin-like ATPase domain"/>
    <property type="match status" value="2"/>
</dbReference>
<sequence length="259" mass="28228">MILVIDVGNTNCTVGVYKEQKLLRHWRMTTDRHRTSDELGMTVLNFFSYANLTPSDIQGIIISSVVPPIMHAMETMCVRYFNIRPLIVGPGIKTGLNLKVDNPREIGSDRIVNAVAASEEYGTPVIVVDFGTATTFCYIDEAGVYQGGAIAPGIMISTEALYNRAAKLPRVDIAESSQIIGKSTVASMQAGIFYGFIGQCEGIIAEMKKQSNTSPVVVATGGLARMITEKSSAVDILDPFLTLKGLELLYRRNKPTTEK</sequence>
<evidence type="ECO:0000255" key="1">
    <source>
        <dbReference type="HAMAP-Rule" id="MF_01274"/>
    </source>
</evidence>
<gene>
    <name evidence="1" type="primary">coaX</name>
    <name type="ordered locus">lin0253</name>
</gene>
<accession>Q92F54</accession>
<name>COAX_LISIN</name>
<organism>
    <name type="scientific">Listeria innocua serovar 6a (strain ATCC BAA-680 / CLIP 11262)</name>
    <dbReference type="NCBI Taxonomy" id="272626"/>
    <lineage>
        <taxon>Bacteria</taxon>
        <taxon>Bacillati</taxon>
        <taxon>Bacillota</taxon>
        <taxon>Bacilli</taxon>
        <taxon>Bacillales</taxon>
        <taxon>Listeriaceae</taxon>
        <taxon>Listeria</taxon>
    </lineage>
</organism>
<feature type="chain" id="PRO_0000267556" description="Type III pantothenate kinase">
    <location>
        <begin position="1"/>
        <end position="259"/>
    </location>
</feature>
<feature type="active site" description="Proton acceptor" evidence="1">
    <location>
        <position position="109"/>
    </location>
</feature>
<feature type="binding site" evidence="1">
    <location>
        <begin position="6"/>
        <end position="13"/>
    </location>
    <ligand>
        <name>ATP</name>
        <dbReference type="ChEBI" id="CHEBI:30616"/>
    </ligand>
</feature>
<feature type="binding site" evidence="1">
    <location>
        <begin position="107"/>
        <end position="110"/>
    </location>
    <ligand>
        <name>substrate</name>
    </ligand>
</feature>
<feature type="binding site" evidence="1">
    <location>
        <position position="129"/>
    </location>
    <ligand>
        <name>K(+)</name>
        <dbReference type="ChEBI" id="CHEBI:29103"/>
    </ligand>
</feature>
<feature type="binding site" evidence="1">
    <location>
        <position position="132"/>
    </location>
    <ligand>
        <name>ATP</name>
        <dbReference type="ChEBI" id="CHEBI:30616"/>
    </ligand>
</feature>
<feature type="binding site" evidence="1">
    <location>
        <position position="184"/>
    </location>
    <ligand>
        <name>substrate</name>
    </ligand>
</feature>
<protein>
    <recommendedName>
        <fullName evidence="1">Type III pantothenate kinase</fullName>
        <ecNumber evidence="1">2.7.1.33</ecNumber>
    </recommendedName>
    <alternativeName>
        <fullName evidence="1">PanK-III</fullName>
    </alternativeName>
    <alternativeName>
        <fullName evidence="1">Pantothenic acid kinase</fullName>
    </alternativeName>
</protein>
<comment type="function">
    <text evidence="1">Catalyzes the phosphorylation of pantothenate (Pan), the first step in CoA biosynthesis.</text>
</comment>
<comment type="catalytic activity">
    <reaction evidence="1">
        <text>(R)-pantothenate + ATP = (R)-4'-phosphopantothenate + ADP + H(+)</text>
        <dbReference type="Rhea" id="RHEA:16373"/>
        <dbReference type="ChEBI" id="CHEBI:10986"/>
        <dbReference type="ChEBI" id="CHEBI:15378"/>
        <dbReference type="ChEBI" id="CHEBI:29032"/>
        <dbReference type="ChEBI" id="CHEBI:30616"/>
        <dbReference type="ChEBI" id="CHEBI:456216"/>
        <dbReference type="EC" id="2.7.1.33"/>
    </reaction>
</comment>
<comment type="cofactor">
    <cofactor evidence="1">
        <name>NH4(+)</name>
        <dbReference type="ChEBI" id="CHEBI:28938"/>
    </cofactor>
    <cofactor evidence="1">
        <name>K(+)</name>
        <dbReference type="ChEBI" id="CHEBI:29103"/>
    </cofactor>
    <text evidence="1">A monovalent cation. Ammonium or potassium.</text>
</comment>
<comment type="pathway">
    <text evidence="1">Cofactor biosynthesis; coenzyme A biosynthesis; CoA from (R)-pantothenate: step 1/5.</text>
</comment>
<comment type="subunit">
    <text evidence="1">Homodimer.</text>
</comment>
<comment type="subcellular location">
    <subcellularLocation>
        <location evidence="1">Cytoplasm</location>
    </subcellularLocation>
</comment>
<comment type="similarity">
    <text evidence="1">Belongs to the type III pantothenate kinase family.</text>
</comment>
<proteinExistence type="inferred from homology"/>
<keyword id="KW-0067">ATP-binding</keyword>
<keyword id="KW-0173">Coenzyme A biosynthesis</keyword>
<keyword id="KW-0963">Cytoplasm</keyword>
<keyword id="KW-0418">Kinase</keyword>
<keyword id="KW-0479">Metal-binding</keyword>
<keyword id="KW-0547">Nucleotide-binding</keyword>
<keyword id="KW-0630">Potassium</keyword>
<keyword id="KW-0808">Transferase</keyword>